<keyword id="KW-0687">Ribonucleoprotein</keyword>
<keyword id="KW-0689">Ribosomal protein</keyword>
<keyword id="KW-0694">RNA-binding</keyword>
<keyword id="KW-0699">rRNA-binding</keyword>
<gene>
    <name evidence="1" type="primary">rpsC</name>
    <name type="ordered locus">EcolC_0399</name>
</gene>
<accession>B1IPY5</accession>
<protein>
    <recommendedName>
        <fullName evidence="1">Small ribosomal subunit protein uS3</fullName>
    </recommendedName>
    <alternativeName>
        <fullName evidence="2">30S ribosomal protein S3</fullName>
    </alternativeName>
</protein>
<name>RS3_ECOLC</name>
<feature type="chain" id="PRO_1000086118" description="Small ribosomal subunit protein uS3">
    <location>
        <begin position="1"/>
        <end position="233"/>
    </location>
</feature>
<feature type="domain" description="KH type-2" evidence="1">
    <location>
        <begin position="39"/>
        <end position="107"/>
    </location>
</feature>
<reference key="1">
    <citation type="submission" date="2008-02" db="EMBL/GenBank/DDBJ databases">
        <title>Complete sequence of Escherichia coli C str. ATCC 8739.</title>
        <authorList>
            <person name="Copeland A."/>
            <person name="Lucas S."/>
            <person name="Lapidus A."/>
            <person name="Glavina del Rio T."/>
            <person name="Dalin E."/>
            <person name="Tice H."/>
            <person name="Bruce D."/>
            <person name="Goodwin L."/>
            <person name="Pitluck S."/>
            <person name="Kiss H."/>
            <person name="Brettin T."/>
            <person name="Detter J.C."/>
            <person name="Han C."/>
            <person name="Kuske C.R."/>
            <person name="Schmutz J."/>
            <person name="Larimer F."/>
            <person name="Land M."/>
            <person name="Hauser L."/>
            <person name="Kyrpides N."/>
            <person name="Mikhailova N."/>
            <person name="Ingram L."/>
            <person name="Richardson P."/>
        </authorList>
    </citation>
    <scope>NUCLEOTIDE SEQUENCE [LARGE SCALE GENOMIC DNA]</scope>
    <source>
        <strain>ATCC 8739 / DSM 1576 / NBRC 3972 / NCIMB 8545 / WDCM 00012 / Crooks</strain>
    </source>
</reference>
<organism>
    <name type="scientific">Escherichia coli (strain ATCC 8739 / DSM 1576 / NBRC 3972 / NCIMB 8545 / WDCM 00012 / Crooks)</name>
    <dbReference type="NCBI Taxonomy" id="481805"/>
    <lineage>
        <taxon>Bacteria</taxon>
        <taxon>Pseudomonadati</taxon>
        <taxon>Pseudomonadota</taxon>
        <taxon>Gammaproteobacteria</taxon>
        <taxon>Enterobacterales</taxon>
        <taxon>Enterobacteriaceae</taxon>
        <taxon>Escherichia</taxon>
    </lineage>
</organism>
<dbReference type="EMBL" id="CP000946">
    <property type="protein sequence ID" value="ACA76077.1"/>
    <property type="molecule type" value="Genomic_DNA"/>
</dbReference>
<dbReference type="RefSeq" id="WP_000529945.1">
    <property type="nucleotide sequence ID" value="NZ_MTFT01000014.1"/>
</dbReference>
<dbReference type="SMR" id="B1IPY5"/>
<dbReference type="GeneID" id="97603663"/>
<dbReference type="KEGG" id="ecl:EcolC_0399"/>
<dbReference type="HOGENOM" id="CLU_058591_0_2_6"/>
<dbReference type="GO" id="GO:0022627">
    <property type="term" value="C:cytosolic small ribosomal subunit"/>
    <property type="evidence" value="ECO:0007669"/>
    <property type="project" value="TreeGrafter"/>
</dbReference>
<dbReference type="GO" id="GO:0003729">
    <property type="term" value="F:mRNA binding"/>
    <property type="evidence" value="ECO:0007669"/>
    <property type="project" value="UniProtKB-UniRule"/>
</dbReference>
<dbReference type="GO" id="GO:0019843">
    <property type="term" value="F:rRNA binding"/>
    <property type="evidence" value="ECO:0007669"/>
    <property type="project" value="UniProtKB-UniRule"/>
</dbReference>
<dbReference type="GO" id="GO:0003735">
    <property type="term" value="F:structural constituent of ribosome"/>
    <property type="evidence" value="ECO:0007669"/>
    <property type="project" value="InterPro"/>
</dbReference>
<dbReference type="GO" id="GO:0006412">
    <property type="term" value="P:translation"/>
    <property type="evidence" value="ECO:0007669"/>
    <property type="project" value="UniProtKB-UniRule"/>
</dbReference>
<dbReference type="CDD" id="cd02412">
    <property type="entry name" value="KH-II_30S_S3"/>
    <property type="match status" value="1"/>
</dbReference>
<dbReference type="FunFam" id="3.30.1140.32:FF:000001">
    <property type="entry name" value="30S ribosomal protein S3"/>
    <property type="match status" value="1"/>
</dbReference>
<dbReference type="FunFam" id="3.30.300.20:FF:000001">
    <property type="entry name" value="30S ribosomal protein S3"/>
    <property type="match status" value="1"/>
</dbReference>
<dbReference type="Gene3D" id="3.30.300.20">
    <property type="match status" value="1"/>
</dbReference>
<dbReference type="Gene3D" id="3.30.1140.32">
    <property type="entry name" value="Ribosomal protein S3, C-terminal domain"/>
    <property type="match status" value="1"/>
</dbReference>
<dbReference type="HAMAP" id="MF_01309_B">
    <property type="entry name" value="Ribosomal_uS3_B"/>
    <property type="match status" value="1"/>
</dbReference>
<dbReference type="InterPro" id="IPR004087">
    <property type="entry name" value="KH_dom"/>
</dbReference>
<dbReference type="InterPro" id="IPR015946">
    <property type="entry name" value="KH_dom-like_a/b"/>
</dbReference>
<dbReference type="InterPro" id="IPR004044">
    <property type="entry name" value="KH_dom_type_2"/>
</dbReference>
<dbReference type="InterPro" id="IPR009019">
    <property type="entry name" value="KH_sf_prok-type"/>
</dbReference>
<dbReference type="InterPro" id="IPR036419">
    <property type="entry name" value="Ribosomal_S3_C_sf"/>
</dbReference>
<dbReference type="InterPro" id="IPR005704">
    <property type="entry name" value="Ribosomal_uS3_bac-typ"/>
</dbReference>
<dbReference type="InterPro" id="IPR001351">
    <property type="entry name" value="Ribosomal_uS3_C"/>
</dbReference>
<dbReference type="InterPro" id="IPR018280">
    <property type="entry name" value="Ribosomal_uS3_CS"/>
</dbReference>
<dbReference type="NCBIfam" id="TIGR01009">
    <property type="entry name" value="rpsC_bact"/>
    <property type="match status" value="1"/>
</dbReference>
<dbReference type="PANTHER" id="PTHR11760">
    <property type="entry name" value="30S/40S RIBOSOMAL PROTEIN S3"/>
    <property type="match status" value="1"/>
</dbReference>
<dbReference type="PANTHER" id="PTHR11760:SF19">
    <property type="entry name" value="SMALL RIBOSOMAL SUBUNIT PROTEIN US3C"/>
    <property type="match status" value="1"/>
</dbReference>
<dbReference type="Pfam" id="PF07650">
    <property type="entry name" value="KH_2"/>
    <property type="match status" value="1"/>
</dbReference>
<dbReference type="Pfam" id="PF00189">
    <property type="entry name" value="Ribosomal_S3_C"/>
    <property type="match status" value="1"/>
</dbReference>
<dbReference type="SMART" id="SM00322">
    <property type="entry name" value="KH"/>
    <property type="match status" value="1"/>
</dbReference>
<dbReference type="SUPFAM" id="SSF54814">
    <property type="entry name" value="Prokaryotic type KH domain (KH-domain type II)"/>
    <property type="match status" value="1"/>
</dbReference>
<dbReference type="SUPFAM" id="SSF54821">
    <property type="entry name" value="Ribosomal protein S3 C-terminal domain"/>
    <property type="match status" value="1"/>
</dbReference>
<dbReference type="PROSITE" id="PS50823">
    <property type="entry name" value="KH_TYPE_2"/>
    <property type="match status" value="1"/>
</dbReference>
<dbReference type="PROSITE" id="PS00548">
    <property type="entry name" value="RIBOSOMAL_S3"/>
    <property type="match status" value="1"/>
</dbReference>
<proteinExistence type="inferred from homology"/>
<evidence type="ECO:0000255" key="1">
    <source>
        <dbReference type="HAMAP-Rule" id="MF_01309"/>
    </source>
</evidence>
<evidence type="ECO:0000305" key="2"/>
<sequence length="233" mass="25983">MGQKVHPNGIRLGIVKPWNSTWFANTKEFADNLDSDFKVRQYLTKELAKASVSRIVIERPAKSIRVTIHTARPGIVIGKKGEDVEKLRKVVADIAGVPAQINIAEVRKPELDAKLVADSITSQLERRVMFRRAMKRAVQNAMRLGAKGIKVEVSGRLGGAEIARTEWYREGRVPLHTLRADIDYNTSEAHTTYGVIGVKVWIFKGEILGGMAAVEQPEKPAAQPKKQQRKGRK</sequence>
<comment type="function">
    <text evidence="1">Binds the lower part of the 30S subunit head. Binds mRNA in the 70S ribosome, positioning it for translation.</text>
</comment>
<comment type="subunit">
    <text evidence="1">Part of the 30S ribosomal subunit. Forms a tight complex with proteins S10 and S14.</text>
</comment>
<comment type="similarity">
    <text evidence="1">Belongs to the universal ribosomal protein uS3 family.</text>
</comment>